<evidence type="ECO:0000250" key="1">
    <source>
        <dbReference type="UniProtKB" id="P26769"/>
    </source>
</evidence>
<evidence type="ECO:0000250" key="2">
    <source>
        <dbReference type="UniProtKB" id="P30803"/>
    </source>
</evidence>
<evidence type="ECO:0000255" key="3"/>
<evidence type="ECO:0000255" key="4">
    <source>
        <dbReference type="PROSITE-ProRule" id="PRU00099"/>
    </source>
</evidence>
<evidence type="ECO:0000255" key="5">
    <source>
        <dbReference type="RuleBase" id="RU000405"/>
    </source>
</evidence>
<evidence type="ECO:0000256" key="6">
    <source>
        <dbReference type="SAM" id="MobiDB-lite"/>
    </source>
</evidence>
<evidence type="ECO:0000269" key="7">
    <source>
    </source>
</evidence>
<evidence type="ECO:0000269" key="8">
    <source>
    </source>
</evidence>
<evidence type="ECO:0000269" key="9">
    <source>
    </source>
</evidence>
<evidence type="ECO:0000303" key="10">
    <source>
    </source>
</evidence>
<evidence type="ECO:0000305" key="11"/>
<evidence type="ECO:0000305" key="12">
    <source>
    </source>
</evidence>
<evidence type="ECO:0000312" key="13">
    <source>
        <dbReference type="FlyBase" id="FBgn0024150"/>
    </source>
</evidence>
<evidence type="ECO:0000312" key="14">
    <source>
        <dbReference type="Proteomes" id="UP000000803"/>
    </source>
</evidence>
<protein>
    <recommendedName>
        <fullName evidence="10 13">Adenylyl cyclase 78C</fullName>
        <ecNumber evidence="7">4.6.1.1</ecNumber>
    </recommendedName>
</protein>
<name>AC78C_DROME</name>
<accession>Q9VP76</accession>
<accession>M9NG95</accession>
<accession>Q9VP75</accession>
<proteinExistence type="evidence at protein level"/>
<organism evidence="14">
    <name type="scientific">Drosophila melanogaster</name>
    <name type="common">Fruit fly</name>
    <dbReference type="NCBI Taxonomy" id="7227"/>
    <lineage>
        <taxon>Eukaryota</taxon>
        <taxon>Metazoa</taxon>
        <taxon>Ecdysozoa</taxon>
        <taxon>Arthropoda</taxon>
        <taxon>Hexapoda</taxon>
        <taxon>Insecta</taxon>
        <taxon>Pterygota</taxon>
        <taxon>Neoptera</taxon>
        <taxon>Endopterygota</taxon>
        <taxon>Diptera</taxon>
        <taxon>Brachycera</taxon>
        <taxon>Muscomorpha</taxon>
        <taxon>Ephydroidea</taxon>
        <taxon>Drosophilidae</taxon>
        <taxon>Drosophila</taxon>
        <taxon>Sophophora</taxon>
    </lineage>
</organism>
<feature type="chain" id="PRO_0000445797" description="Adenylyl cyclase 78C" evidence="11">
    <location>
        <begin position="1"/>
        <end position="1718"/>
    </location>
</feature>
<feature type="topological domain" description="Cytoplasmic" evidence="11">
    <location>
        <begin position="1"/>
        <end position="327"/>
    </location>
</feature>
<feature type="transmembrane region" description="Helical" evidence="3">
    <location>
        <begin position="328"/>
        <end position="348"/>
    </location>
</feature>
<feature type="topological domain" description="Extracellular" evidence="11">
    <location>
        <begin position="349"/>
        <end position="366"/>
    </location>
</feature>
<feature type="transmembrane region" description="Helical" evidence="3">
    <location>
        <begin position="367"/>
        <end position="387"/>
    </location>
</feature>
<feature type="topological domain" description="Cytoplasmic" evidence="11">
    <location>
        <begin position="388"/>
        <end position="397"/>
    </location>
</feature>
<feature type="transmembrane region" description="Helical" evidence="3">
    <location>
        <begin position="398"/>
        <end position="418"/>
    </location>
</feature>
<feature type="topological domain" description="Extracellular" evidence="11">
    <location>
        <begin position="419"/>
        <end position="422"/>
    </location>
</feature>
<feature type="transmembrane region" description="Helical" evidence="3">
    <location>
        <begin position="423"/>
        <end position="443"/>
    </location>
</feature>
<feature type="topological domain" description="Cytoplasmic" evidence="11">
    <location>
        <begin position="444"/>
        <end position="445"/>
    </location>
</feature>
<feature type="transmembrane region" description="Helical" evidence="3">
    <location>
        <begin position="446"/>
        <end position="466"/>
    </location>
</feature>
<feature type="topological domain" description="Extracellular" evidence="11">
    <location>
        <begin position="467"/>
        <end position="476"/>
    </location>
</feature>
<feature type="transmembrane region" description="Helical" evidence="3">
    <location>
        <begin position="477"/>
        <end position="497"/>
    </location>
</feature>
<feature type="topological domain" description="Cytoplasmic" evidence="11">
    <location>
        <begin position="498"/>
        <end position="1023"/>
    </location>
</feature>
<feature type="transmembrane region" description="Helical" evidence="3">
    <location>
        <begin position="1024"/>
        <end position="1044"/>
    </location>
</feature>
<feature type="topological domain" description="Extracellular" evidence="11">
    <location>
        <begin position="1045"/>
        <end position="1048"/>
    </location>
</feature>
<feature type="transmembrane region" description="Helical" evidence="3">
    <location>
        <begin position="1049"/>
        <end position="1069"/>
    </location>
</feature>
<feature type="topological domain" description="Cytoplasmic" evidence="11">
    <location>
        <begin position="1070"/>
        <end position="1094"/>
    </location>
</feature>
<feature type="transmembrane region" description="Helical" evidence="3">
    <location>
        <begin position="1095"/>
        <end position="1115"/>
    </location>
</feature>
<feature type="topological domain" description="Extracellular" evidence="11">
    <location>
        <begin position="1116"/>
        <end position="1241"/>
    </location>
</feature>
<feature type="transmembrane region" description="Helical" evidence="3">
    <location>
        <begin position="1242"/>
        <end position="1262"/>
    </location>
</feature>
<feature type="topological domain" description="Cytoplasmic" evidence="11">
    <location>
        <position position="1263"/>
    </location>
</feature>
<feature type="transmembrane region" description="Helical" evidence="3">
    <location>
        <begin position="1264"/>
        <end position="1284"/>
    </location>
</feature>
<feature type="topological domain" description="Extracellular" evidence="11">
    <location>
        <begin position="1285"/>
        <end position="1301"/>
    </location>
</feature>
<feature type="transmembrane region" description="Helical" evidence="3">
    <location>
        <begin position="1302"/>
        <end position="1322"/>
    </location>
</feature>
<feature type="topological domain" description="Cytoplasmic" evidence="11">
    <location>
        <begin position="1323"/>
        <end position="1718"/>
    </location>
</feature>
<feature type="region of interest" description="Disordered" evidence="6">
    <location>
        <begin position="41"/>
        <end position="84"/>
    </location>
</feature>
<feature type="region of interest" description="Disordered" evidence="6">
    <location>
        <begin position="102"/>
        <end position="137"/>
    </location>
</feature>
<feature type="region of interest" description="Disordered" evidence="6">
    <location>
        <begin position="153"/>
        <end position="201"/>
    </location>
</feature>
<feature type="region of interest" description="Disordered" evidence="6">
    <location>
        <begin position="1628"/>
        <end position="1693"/>
    </location>
</feature>
<feature type="compositionally biased region" description="Polar residues" evidence="6">
    <location>
        <begin position="41"/>
        <end position="53"/>
    </location>
</feature>
<feature type="compositionally biased region" description="Basic and acidic residues" evidence="6">
    <location>
        <begin position="75"/>
        <end position="84"/>
    </location>
</feature>
<feature type="compositionally biased region" description="Acidic residues" evidence="6">
    <location>
        <begin position="109"/>
        <end position="123"/>
    </location>
</feature>
<feature type="compositionally biased region" description="Low complexity" evidence="6">
    <location>
        <begin position="153"/>
        <end position="168"/>
    </location>
</feature>
<feature type="compositionally biased region" description="Polar residues" evidence="6">
    <location>
        <begin position="1648"/>
        <end position="1659"/>
    </location>
</feature>
<feature type="compositionally biased region" description="Basic residues" evidence="6">
    <location>
        <begin position="1668"/>
        <end position="1681"/>
    </location>
</feature>
<feature type="compositionally biased region" description="Polar residues" evidence="6">
    <location>
        <begin position="1682"/>
        <end position="1693"/>
    </location>
</feature>
<feature type="binding site" evidence="2">
    <location>
        <begin position="580"/>
        <end position="585"/>
    </location>
    <ligand>
        <name>ATP</name>
        <dbReference type="ChEBI" id="CHEBI:30616"/>
    </ligand>
</feature>
<feature type="binding site" evidence="4">
    <location>
        <position position="580"/>
    </location>
    <ligand>
        <name>Mg(2+)</name>
        <dbReference type="ChEBI" id="CHEBI:18420"/>
        <label>1</label>
    </ligand>
</feature>
<feature type="binding site" evidence="4">
    <location>
        <position position="580"/>
    </location>
    <ligand>
        <name>Mg(2+)</name>
        <dbReference type="ChEBI" id="CHEBI:18420"/>
        <label>2</label>
    </ligand>
</feature>
<feature type="binding site" evidence="4">
    <location>
        <position position="581"/>
    </location>
    <ligand>
        <name>Mg(2+)</name>
        <dbReference type="ChEBI" id="CHEBI:18420"/>
        <label>2</label>
    </ligand>
</feature>
<feature type="binding site" evidence="2">
    <location>
        <begin position="622"/>
        <end position="624"/>
    </location>
    <ligand>
        <name>ATP</name>
        <dbReference type="ChEBI" id="CHEBI:30616"/>
    </ligand>
</feature>
<feature type="binding site" evidence="4">
    <location>
        <position position="624"/>
    </location>
    <ligand>
        <name>Mg(2+)</name>
        <dbReference type="ChEBI" id="CHEBI:18420"/>
        <label>1</label>
    </ligand>
</feature>
<feature type="binding site" evidence="4">
    <location>
        <position position="624"/>
    </location>
    <ligand>
        <name>Mg(2+)</name>
        <dbReference type="ChEBI" id="CHEBI:18420"/>
        <label>2</label>
    </ligand>
</feature>
<feature type="binding site" evidence="2">
    <location>
        <position position="672"/>
    </location>
    <ligand>
        <name>ATP</name>
        <dbReference type="ChEBI" id="CHEBI:30616"/>
    </ligand>
</feature>
<feature type="binding site" evidence="1">
    <location>
        <position position="1440"/>
    </location>
    <ligand>
        <name>ATP</name>
        <dbReference type="ChEBI" id="CHEBI:30616"/>
    </ligand>
</feature>
<feature type="binding site" evidence="1">
    <location>
        <begin position="1517"/>
        <end position="1519"/>
    </location>
    <ligand>
        <name>ATP</name>
        <dbReference type="ChEBI" id="CHEBI:30616"/>
    </ligand>
</feature>
<feature type="binding site" evidence="1">
    <location>
        <begin position="1524"/>
        <end position="1528"/>
    </location>
    <ligand>
        <name>ATP</name>
        <dbReference type="ChEBI" id="CHEBI:30616"/>
    </ligand>
</feature>
<feature type="binding site" evidence="1">
    <location>
        <position position="1564"/>
    </location>
    <ligand>
        <name>ATP</name>
        <dbReference type="ChEBI" id="CHEBI:30616"/>
    </ligand>
</feature>
<feature type="splice variant" id="VSP_059968" description="In isoform C.">
    <location>
        <begin position="1"/>
        <end position="496"/>
    </location>
</feature>
<comment type="function">
    <molecule>Isoform B</molecule>
    <text evidence="7 8 9">Catalyzes the formation of the signaling molecule cAMP in response to G-protein coupled receptor signaling (PubMed:10603085, PubMed:23929551). Probably downstream of gustatory receptors, involved in taste perception of sucrose, trehalose and caffeine (PubMed:19046378). Has no role in bitter perception (PubMed:19046378). In the circadian brain neuron evening cells (E-cells), involved in circadian pacemaker synchronization by playing a role in signaling downstream of the G protein-coupled receptor Pdfr, probably in conjunction with other, as yet unidentified, adenylate cyclases (PubMed:23929551).</text>
</comment>
<comment type="function">
    <molecule>Isoform C</molecule>
    <text evidence="7">Does not have adenylyl cyclase activity and it is not involved in taste perception.</text>
</comment>
<comment type="catalytic activity">
    <reaction evidence="7">
        <text>ATP = 3',5'-cyclic AMP + diphosphate</text>
        <dbReference type="Rhea" id="RHEA:15389"/>
        <dbReference type="ChEBI" id="CHEBI:30616"/>
        <dbReference type="ChEBI" id="CHEBI:33019"/>
        <dbReference type="ChEBI" id="CHEBI:58165"/>
        <dbReference type="EC" id="4.6.1.1"/>
    </reaction>
</comment>
<comment type="cofactor">
    <cofactor evidence="2">
        <name>Mg(2+)</name>
        <dbReference type="ChEBI" id="CHEBI:18420"/>
    </cofactor>
    <cofactor evidence="2">
        <name>Mn(2+)</name>
        <dbReference type="ChEBI" id="CHEBI:29035"/>
    </cofactor>
    <text evidence="2">Binds 2 magnesium ions per subunit. Is also active with manganese (in vitro).</text>
</comment>
<comment type="subcellular location">
    <subcellularLocation>
        <location evidence="11">Cell membrane</location>
        <topology evidence="3">Multi-pass membrane protein</topology>
    </subcellularLocation>
</comment>
<comment type="alternative products">
    <event type="alternative splicing"/>
    <isoform>
        <id>Q9VP76-1</id>
        <name evidence="13">B</name>
        <name evidence="10">L</name>
        <sequence type="displayed"/>
    </isoform>
    <isoform>
        <id>Q9VP76-2</id>
        <name evidence="13">C</name>
        <name evidence="10">S</name>
        <sequence type="described" ref="VSP_059968"/>
    </isoform>
</comment>
<comment type="tissue specificity">
    <text evidence="8">Expressed in labella, particularly in sugar-sensitive gustatory receptor neurons (GRNs).</text>
</comment>
<comment type="developmental stage">
    <text evidence="7">Isoform B: Ubiquitously expressed in embryos, larvae and adult (PubMed:10603085). Isoform C: Temporally restricted to the earliest hours of embryogenesis before cellularization (PubMed:10603085). As germ band extension commences, expression decreases along the entire ventral surface of the embryo and is restricted to the cephalic furrow (CF) and anterior and posterior dorsal transverse folds (DTFs) (PubMed:10603085). By state 7, restricted expression in the CF and DTFs on the dorsal and lateral surfaces of the embryo (PubMed:10603085).</text>
</comment>
<comment type="domain">
    <text evidence="12">The protein contains two modules with six transmembrane helices each; both are required for catalytic activity. Isolated N-terminal or C-terminal guanylate cyclase domains have no catalytic activity, but when they are brought together, enzyme activity is restored. The active site is at the interface of the two domains. Both contribute substrate-binding residues, but the catalytic metal ions are bound exclusively via the N-terminal guanylate cyclase domain.</text>
</comment>
<comment type="disruption phenotype">
    <text evidence="8 9">RNAi-mediated knockdown in sugar gustatory neurons results in reduced sucrose response and no alteration in response to water (PubMed:19046378). RNAi-mediated knockdown in the pacemaker dorsal lateral neurons (LNDs) results in reduced Pigment-dispersing factor (Pdf) response in the circadian brain neurons evening cells (E-cells) (PubMed:23929551). Isoform B: Results in reduced sucrose and trehalose substances response and no alteration of water response or bitter perception (PubMed:19046378).</text>
</comment>
<comment type="miscellaneous">
    <molecule>Isoform C</molecule>
    <text evidence="7">Catalytically inactive.</text>
</comment>
<comment type="similarity">
    <text evidence="3 5">Belongs to the adenylyl cyclase class-4/guanylyl cyclase family.</text>
</comment>
<gene>
    <name evidence="10 13" type="primary">Ac78C</name>
    <name evidence="13" type="ORF">CG10564</name>
</gene>
<dbReference type="EC" id="4.6.1.1" evidence="7"/>
<dbReference type="EMBL" id="AE014296">
    <property type="protein sequence ID" value="AAF51680.3"/>
    <property type="molecule type" value="Genomic_DNA"/>
</dbReference>
<dbReference type="EMBL" id="AE014296">
    <property type="protein sequence ID" value="AFH04528.1"/>
    <property type="molecule type" value="Genomic_DNA"/>
</dbReference>
<dbReference type="RefSeq" id="NP_001246857.1">
    <molecule id="Q9VP76-2"/>
    <property type="nucleotide sequence ID" value="NM_001259928.2"/>
</dbReference>
<dbReference type="RefSeq" id="NP_524194.3">
    <molecule id="Q9VP76-1"/>
    <property type="nucleotide sequence ID" value="NM_079470.5"/>
</dbReference>
<dbReference type="SMR" id="Q9VP76"/>
<dbReference type="FunCoup" id="Q9VP76">
    <property type="interactions" value="90"/>
</dbReference>
<dbReference type="IntAct" id="Q9VP76">
    <property type="interactions" value="3"/>
</dbReference>
<dbReference type="STRING" id="7227.FBpp0303100"/>
<dbReference type="GlyGen" id="Q9VP76">
    <property type="glycosylation" value="5 sites"/>
</dbReference>
<dbReference type="PaxDb" id="7227-FBpp0290915"/>
<dbReference type="EnsemblMetazoa" id="FBtr0301701">
    <molecule id="Q9VP76-1"/>
    <property type="protein sequence ID" value="FBpp0290915"/>
    <property type="gene ID" value="FBgn0024150"/>
</dbReference>
<dbReference type="EnsemblMetazoa" id="FBtr0305501">
    <molecule id="Q9VP76-2"/>
    <property type="protein sequence ID" value="FBpp0293953"/>
    <property type="gene ID" value="FBgn0024150"/>
</dbReference>
<dbReference type="GeneID" id="40333"/>
<dbReference type="KEGG" id="dme:Dmel_CG10564"/>
<dbReference type="UCSC" id="CG10564-RA">
    <molecule id="Q9VP76-1"/>
    <property type="organism name" value="d. melanogaster"/>
</dbReference>
<dbReference type="AGR" id="FB:FBgn0024150"/>
<dbReference type="CTD" id="40333"/>
<dbReference type="FlyBase" id="FBgn0024150">
    <property type="gene designation" value="Ac78C"/>
</dbReference>
<dbReference type="VEuPathDB" id="VectorBase:FBgn0024150"/>
<dbReference type="HOGENOM" id="CLU_001072_3_1_1"/>
<dbReference type="InParanoid" id="Q9VP76"/>
<dbReference type="OMA" id="HRTIFIC"/>
<dbReference type="OrthoDB" id="60033at2759"/>
<dbReference type="PhylomeDB" id="Q9VP76"/>
<dbReference type="Reactome" id="R-DME-163615">
    <property type="pathway name" value="PKA activation"/>
</dbReference>
<dbReference type="Reactome" id="R-DME-170660">
    <property type="pathway name" value="Adenylate cyclase activating pathway"/>
</dbReference>
<dbReference type="Reactome" id="R-DME-170670">
    <property type="pathway name" value="Adenylate cyclase inhibitory pathway"/>
</dbReference>
<dbReference type="Reactome" id="R-DME-5610787">
    <property type="pathway name" value="Hedgehog 'off' state"/>
</dbReference>
<dbReference type="BioGRID-ORCS" id="40333">
    <property type="hits" value="0 hits in 1 CRISPR screen"/>
</dbReference>
<dbReference type="GenomeRNAi" id="40333"/>
<dbReference type="PRO" id="PR:Q9VP76"/>
<dbReference type="Proteomes" id="UP000000803">
    <property type="component" value="Chromosome 3L"/>
</dbReference>
<dbReference type="Bgee" id="FBgn0024150">
    <property type="expression patterns" value="Expressed in adult Malpighian tubule stellate cell of main segment in Malpighian tubule and 99 other cell types or tissues"/>
</dbReference>
<dbReference type="ExpressionAtlas" id="Q9VP76">
    <property type="expression patterns" value="baseline and differential"/>
</dbReference>
<dbReference type="GO" id="GO:0005886">
    <property type="term" value="C:plasma membrane"/>
    <property type="evidence" value="ECO:0000318"/>
    <property type="project" value="GO_Central"/>
</dbReference>
<dbReference type="GO" id="GO:0004016">
    <property type="term" value="F:adenylate cyclase activity"/>
    <property type="evidence" value="ECO:0000314"/>
    <property type="project" value="UniProtKB"/>
</dbReference>
<dbReference type="GO" id="GO:0005524">
    <property type="term" value="F:ATP binding"/>
    <property type="evidence" value="ECO:0007669"/>
    <property type="project" value="UniProtKB-KW"/>
</dbReference>
<dbReference type="GO" id="GO:0046872">
    <property type="term" value="F:metal ion binding"/>
    <property type="evidence" value="ECO:0007669"/>
    <property type="project" value="UniProtKB-KW"/>
</dbReference>
<dbReference type="GO" id="GO:0007189">
    <property type="term" value="P:adenylate cyclase-activating G protein-coupled receptor signaling pathway"/>
    <property type="evidence" value="ECO:0000318"/>
    <property type="project" value="GO_Central"/>
</dbReference>
<dbReference type="GO" id="GO:0006171">
    <property type="term" value="P:cAMP biosynthetic process"/>
    <property type="evidence" value="ECO:0000318"/>
    <property type="project" value="GO_Central"/>
</dbReference>
<dbReference type="GO" id="GO:0007623">
    <property type="term" value="P:circadian rhythm"/>
    <property type="evidence" value="ECO:0000315"/>
    <property type="project" value="UniProtKB"/>
</dbReference>
<dbReference type="GO" id="GO:0001582">
    <property type="term" value="P:detection of chemical stimulus involved in sensory perception of sweet taste"/>
    <property type="evidence" value="ECO:0000315"/>
    <property type="project" value="FlyBase"/>
</dbReference>
<dbReference type="GO" id="GO:0035556">
    <property type="term" value="P:intracellular signal transduction"/>
    <property type="evidence" value="ECO:0007669"/>
    <property type="project" value="InterPro"/>
</dbReference>
<dbReference type="GO" id="GO:0031000">
    <property type="term" value="P:response to caffeine"/>
    <property type="evidence" value="ECO:0000314"/>
    <property type="project" value="FlyBase"/>
</dbReference>
<dbReference type="GO" id="GO:0009744">
    <property type="term" value="P:response to sucrose"/>
    <property type="evidence" value="ECO:0000314"/>
    <property type="project" value="FlyBase"/>
</dbReference>
<dbReference type="GO" id="GO:0010353">
    <property type="term" value="P:response to trehalose"/>
    <property type="evidence" value="ECO:0000314"/>
    <property type="project" value="FlyBase"/>
</dbReference>
<dbReference type="CDD" id="cd07302">
    <property type="entry name" value="CHD"/>
    <property type="match status" value="2"/>
</dbReference>
<dbReference type="FunFam" id="3.30.70.1230:FF:000032">
    <property type="entry name" value="Adenylyl cyclase 78C"/>
    <property type="match status" value="1"/>
</dbReference>
<dbReference type="FunFam" id="3.30.70.1230:FF:000040">
    <property type="entry name" value="Ca(2+)/calmodulin-responsive adenylate cyclase"/>
    <property type="match status" value="1"/>
</dbReference>
<dbReference type="Gene3D" id="3.30.70.1230">
    <property type="entry name" value="Nucleotide cyclase"/>
    <property type="match status" value="2"/>
</dbReference>
<dbReference type="InterPro" id="IPR001054">
    <property type="entry name" value="A/G_cyclase"/>
</dbReference>
<dbReference type="InterPro" id="IPR018297">
    <property type="entry name" value="A/G_cyclase_CS"/>
</dbReference>
<dbReference type="InterPro" id="IPR032628">
    <property type="entry name" value="AC_N"/>
</dbReference>
<dbReference type="InterPro" id="IPR009398">
    <property type="entry name" value="Adcy_conserved_dom"/>
</dbReference>
<dbReference type="InterPro" id="IPR029787">
    <property type="entry name" value="Nucleotide_cyclase"/>
</dbReference>
<dbReference type="PANTHER" id="PTHR45627">
    <property type="entry name" value="ADENYLATE CYCLASE TYPE 1"/>
    <property type="match status" value="1"/>
</dbReference>
<dbReference type="PANTHER" id="PTHR45627:SF1">
    <property type="entry name" value="ADENYLATE CYCLASE TYPE 8"/>
    <property type="match status" value="1"/>
</dbReference>
<dbReference type="Pfam" id="PF16214">
    <property type="entry name" value="AC_N"/>
    <property type="match status" value="1"/>
</dbReference>
<dbReference type="Pfam" id="PF06327">
    <property type="entry name" value="Adcy_cons_dom"/>
    <property type="match status" value="1"/>
</dbReference>
<dbReference type="Pfam" id="PF00211">
    <property type="entry name" value="Guanylate_cyc"/>
    <property type="match status" value="2"/>
</dbReference>
<dbReference type="SMART" id="SM00044">
    <property type="entry name" value="CYCc"/>
    <property type="match status" value="2"/>
</dbReference>
<dbReference type="SUPFAM" id="SSF55073">
    <property type="entry name" value="Nucleotide cyclase"/>
    <property type="match status" value="2"/>
</dbReference>
<dbReference type="PROSITE" id="PS00452">
    <property type="entry name" value="GUANYLATE_CYCLASE_1"/>
    <property type="match status" value="1"/>
</dbReference>
<dbReference type="PROSITE" id="PS50125">
    <property type="entry name" value="GUANYLATE_CYCLASE_2"/>
    <property type="match status" value="2"/>
</dbReference>
<keyword id="KW-0025">Alternative splicing</keyword>
<keyword id="KW-0067">ATP-binding</keyword>
<keyword id="KW-0115">cAMP biosynthesis</keyword>
<keyword id="KW-1003">Cell membrane</keyword>
<keyword id="KW-0456">Lyase</keyword>
<keyword id="KW-0460">Magnesium</keyword>
<keyword id="KW-0472">Membrane</keyword>
<keyword id="KW-0479">Metal-binding</keyword>
<keyword id="KW-0547">Nucleotide-binding</keyword>
<keyword id="KW-1185">Reference proteome</keyword>
<keyword id="KW-0812">Transmembrane</keyword>
<keyword id="KW-1133">Transmembrane helix</keyword>
<sequence length="1718" mass="189013">MDVELEEEEERICLRTAEEGQLANMDDDKLVSDEVHLRQLSATPSSAFSLQHSRGSDTKEEAPPEGGTMGGKSAAPREEGEPDERVVLRRAVDKGAIALAQIDDLKLEGDDDDEAVVNGEEVDGLGLSNPAAQTTDDEQITVNGTGAAATSSVAADAASSEQDAASTAMATPDMSKIPRLPGDGAQMEDNGSGDLPPSLRASTTSILSNLRKKQQGGPLRGGVAKQTPLRVQSVRIVEAKRAYGPKRRTESCSIFGNSNFEHDLESGNSLASIPGQSQRPLNNEMYSAFKSGNVVKGILCPSLTNSFKQSSLERSYLTYTHRQRQKSLIIVNVVDFVLKIVLAFVWIMRRSELGPIESDDGTSMATAITWSVCCGIANMAICFLGYWRCFANNYLHWAAVCTWVLFNIQGFVGQGVGFADREYLVWYILFVIFVPYAMLPLPLKWCVVGGTITASCHLAVITIIKLQHGEATINPECVLFQIFANFILYTAINVAGMYTKYLTDRGQRLAFIETHKAMEHKKESEKELQRTQKLLDSILPNIVNNQIRSEMYKGTDPTVETQFNKLYVYPMDNVSILFADIKGFTELASKTSAQQLVKILNDLFARFDRIAEDNHCLRVKLLGDCYYCVSQFESDNWKTRPDHAVCSVETGLHMIKAIKDVRLHTHVDLNMRIGIHSGSVMCGVLGNKKWHFDVWSNDVIIANHMESGGIPGRVHISEATLKCLNDAYEVEPGNGGCRDNHLKMLNVKTYLIKRTEPLRPKRRFGTRSSAHLAGSVATAAPPCATPTALPKSISASGSGSIGGVTATGNDGASIDGRSLEYAATIAVPAQQPTQLLQQQQKKNISLNSLPNVVEGVAMDSRRIRNGCGVMGGAGGTGGGGTGPCGMSTVSSPTAMMSAPLEVQLRPRNGACSIQNLAEAIDGKGLIIEDESTTDWIPEIPFKNLNSPEDGLNRADSILVDTKEDHRVSVAVLDEEIDEFIEQNIQINSNKEIRREYLNPWTLKFKDKSQEQKFCQLREDMFRSNMLCVFVIWIFMVLCQVIIIPRCTRLIICLSVGTVILTFCCVLVMAEEFPGLPRCLKTNSAKLVHQRQRRTLFICGVIVSMCMLSAIGLVLCPSSTYIGTADEHSRFLRMVSPYSNISMTEKEFKLNVYLSATIHHNITISTPASGGPTPLVDITSSGPSDEFVRSTLNALTLNLTPPLPQSHRPYTLTTNGHSVSLSNLSYSDASVMQSSSDVEGQCAHPEYLVFTWVLCLVSLATALKLYYLVKALMALAMVAFYTTLIMMKFGSGDSFSLVELSRLGMPLGVQMLILLISFLVMVCYHARLVEVTSRLDFIWKEQAERELTNMKSNRALNDTLIKNILPDHVATYYLSDEHTDELYSKMHNLCGVMFASIPNFQDFYSEDIDNGKACIRILNEIICDFDELLEEPRFASVEKIKTVGATYMAAAGLNHEHLRLRGETSEDSVCDLVEFAFAMKQKLEEINGDAFNNFQLRVGICSGPLVSGVIGARKPVYDIWGNTVNVASRMDSTGENWRVQVPENTAELLCSRGYTCVKRGEIAVKGKGMMTTFYVHPKGISESQLISPVRMPAGIPLAQTPNLQRQTSHHGSFSAVVFGMLQASKRSTAIAGTPTGTPSPQIRRGHRGSTFSSVRLSQKSTTVNPVRRNTTRVRGRSYRQKKSSSNNSIVTQASSSYMPSFRRIDQIETTISKSHNDAL</sequence>
<reference evidence="14" key="1">
    <citation type="journal article" date="2000" name="Science">
        <title>The genome sequence of Drosophila melanogaster.</title>
        <authorList>
            <person name="Adams M.D."/>
            <person name="Celniker S.E."/>
            <person name="Holt R.A."/>
            <person name="Evans C.A."/>
            <person name="Gocayne J.D."/>
            <person name="Amanatides P.G."/>
            <person name="Scherer S.E."/>
            <person name="Li P.W."/>
            <person name="Hoskins R.A."/>
            <person name="Galle R.F."/>
            <person name="George R.A."/>
            <person name="Lewis S.E."/>
            <person name="Richards S."/>
            <person name="Ashburner M."/>
            <person name="Henderson S.N."/>
            <person name="Sutton G.G."/>
            <person name="Wortman J.R."/>
            <person name="Yandell M.D."/>
            <person name="Zhang Q."/>
            <person name="Chen L.X."/>
            <person name="Brandon R.C."/>
            <person name="Rogers Y.-H.C."/>
            <person name="Blazej R.G."/>
            <person name="Champe M."/>
            <person name="Pfeiffer B.D."/>
            <person name="Wan K.H."/>
            <person name="Doyle C."/>
            <person name="Baxter E.G."/>
            <person name="Helt G."/>
            <person name="Nelson C.R."/>
            <person name="Miklos G.L.G."/>
            <person name="Abril J.F."/>
            <person name="Agbayani A."/>
            <person name="An H.-J."/>
            <person name="Andrews-Pfannkoch C."/>
            <person name="Baldwin D."/>
            <person name="Ballew R.M."/>
            <person name="Basu A."/>
            <person name="Baxendale J."/>
            <person name="Bayraktaroglu L."/>
            <person name="Beasley E.M."/>
            <person name="Beeson K.Y."/>
            <person name="Benos P.V."/>
            <person name="Berman B.P."/>
            <person name="Bhandari D."/>
            <person name="Bolshakov S."/>
            <person name="Borkova D."/>
            <person name="Botchan M.R."/>
            <person name="Bouck J."/>
            <person name="Brokstein P."/>
            <person name="Brottier P."/>
            <person name="Burtis K.C."/>
            <person name="Busam D.A."/>
            <person name="Butler H."/>
            <person name="Cadieu E."/>
            <person name="Center A."/>
            <person name="Chandra I."/>
            <person name="Cherry J.M."/>
            <person name="Cawley S."/>
            <person name="Dahlke C."/>
            <person name="Davenport L.B."/>
            <person name="Davies P."/>
            <person name="de Pablos B."/>
            <person name="Delcher A."/>
            <person name="Deng Z."/>
            <person name="Mays A.D."/>
            <person name="Dew I."/>
            <person name="Dietz S.M."/>
            <person name="Dodson K."/>
            <person name="Doup L.E."/>
            <person name="Downes M."/>
            <person name="Dugan-Rocha S."/>
            <person name="Dunkov B.C."/>
            <person name="Dunn P."/>
            <person name="Durbin K.J."/>
            <person name="Evangelista C.C."/>
            <person name="Ferraz C."/>
            <person name="Ferriera S."/>
            <person name="Fleischmann W."/>
            <person name="Fosler C."/>
            <person name="Gabrielian A.E."/>
            <person name="Garg N.S."/>
            <person name="Gelbart W.M."/>
            <person name="Glasser K."/>
            <person name="Glodek A."/>
            <person name="Gong F."/>
            <person name="Gorrell J.H."/>
            <person name="Gu Z."/>
            <person name="Guan P."/>
            <person name="Harris M."/>
            <person name="Harris N.L."/>
            <person name="Harvey D.A."/>
            <person name="Heiman T.J."/>
            <person name="Hernandez J.R."/>
            <person name="Houck J."/>
            <person name="Hostin D."/>
            <person name="Houston K.A."/>
            <person name="Howland T.J."/>
            <person name="Wei M.-H."/>
            <person name="Ibegwam C."/>
            <person name="Jalali M."/>
            <person name="Kalush F."/>
            <person name="Karpen G.H."/>
            <person name="Ke Z."/>
            <person name="Kennison J.A."/>
            <person name="Ketchum K.A."/>
            <person name="Kimmel B.E."/>
            <person name="Kodira C.D."/>
            <person name="Kraft C.L."/>
            <person name="Kravitz S."/>
            <person name="Kulp D."/>
            <person name="Lai Z."/>
            <person name="Lasko P."/>
            <person name="Lei Y."/>
            <person name="Levitsky A.A."/>
            <person name="Li J.H."/>
            <person name="Li Z."/>
            <person name="Liang Y."/>
            <person name="Lin X."/>
            <person name="Liu X."/>
            <person name="Mattei B."/>
            <person name="McIntosh T.C."/>
            <person name="McLeod M.P."/>
            <person name="McPherson D."/>
            <person name="Merkulov G."/>
            <person name="Milshina N.V."/>
            <person name="Mobarry C."/>
            <person name="Morris J."/>
            <person name="Moshrefi A."/>
            <person name="Mount S.M."/>
            <person name="Moy M."/>
            <person name="Murphy B."/>
            <person name="Murphy L."/>
            <person name="Muzny D.M."/>
            <person name="Nelson D.L."/>
            <person name="Nelson D.R."/>
            <person name="Nelson K.A."/>
            <person name="Nixon K."/>
            <person name="Nusskern D.R."/>
            <person name="Pacleb J.M."/>
            <person name="Palazzolo M."/>
            <person name="Pittman G.S."/>
            <person name="Pan S."/>
            <person name="Pollard J."/>
            <person name="Puri V."/>
            <person name="Reese M.G."/>
            <person name="Reinert K."/>
            <person name="Remington K."/>
            <person name="Saunders R.D.C."/>
            <person name="Scheeler F."/>
            <person name="Shen H."/>
            <person name="Shue B.C."/>
            <person name="Siden-Kiamos I."/>
            <person name="Simpson M."/>
            <person name="Skupski M.P."/>
            <person name="Smith T.J."/>
            <person name="Spier E."/>
            <person name="Spradling A.C."/>
            <person name="Stapleton M."/>
            <person name="Strong R."/>
            <person name="Sun E."/>
            <person name="Svirskas R."/>
            <person name="Tector C."/>
            <person name="Turner R."/>
            <person name="Venter E."/>
            <person name="Wang A.H."/>
            <person name="Wang X."/>
            <person name="Wang Z.-Y."/>
            <person name="Wassarman D.A."/>
            <person name="Weinstock G.M."/>
            <person name="Weissenbach J."/>
            <person name="Williams S.M."/>
            <person name="Woodage T."/>
            <person name="Worley K.C."/>
            <person name="Wu D."/>
            <person name="Yang S."/>
            <person name="Yao Q.A."/>
            <person name="Ye J."/>
            <person name="Yeh R.-F."/>
            <person name="Zaveri J.S."/>
            <person name="Zhan M."/>
            <person name="Zhang G."/>
            <person name="Zhao Q."/>
            <person name="Zheng L."/>
            <person name="Zheng X.H."/>
            <person name="Zhong F.N."/>
            <person name="Zhong W."/>
            <person name="Zhou X."/>
            <person name="Zhu S.C."/>
            <person name="Zhu X."/>
            <person name="Smith H.O."/>
            <person name="Gibbs R.A."/>
            <person name="Myers E.W."/>
            <person name="Rubin G.M."/>
            <person name="Venter J.C."/>
        </authorList>
    </citation>
    <scope>NUCLEOTIDE SEQUENCE [LARGE SCALE GENOMIC DNA]</scope>
    <source>
        <strain evidence="14">Berkeley</strain>
    </source>
</reference>
<reference evidence="14" key="2">
    <citation type="journal article" date="2002" name="Genome Biol.">
        <title>Annotation of the Drosophila melanogaster euchromatic genome: a systematic review.</title>
        <authorList>
            <person name="Misra S."/>
            <person name="Crosby M.A."/>
            <person name="Mungall C.J."/>
            <person name="Matthews B.B."/>
            <person name="Campbell K.S."/>
            <person name="Hradecky P."/>
            <person name="Huang Y."/>
            <person name="Kaminker J.S."/>
            <person name="Millburn G.H."/>
            <person name="Prochnik S.E."/>
            <person name="Smith C.D."/>
            <person name="Tupy J.L."/>
            <person name="Whitfield E.J."/>
            <person name="Bayraktaroglu L."/>
            <person name="Berman B.P."/>
            <person name="Bettencourt B.R."/>
            <person name="Celniker S.E."/>
            <person name="de Grey A.D.N.J."/>
            <person name="Drysdale R.A."/>
            <person name="Harris N.L."/>
            <person name="Richter J."/>
            <person name="Russo S."/>
            <person name="Schroeder A.J."/>
            <person name="Shu S.Q."/>
            <person name="Stapleton M."/>
            <person name="Yamada C."/>
            <person name="Ashburner M."/>
            <person name="Gelbart W.M."/>
            <person name="Rubin G.M."/>
            <person name="Lewis S.E."/>
        </authorList>
    </citation>
    <scope>GENOME REANNOTATION</scope>
    <source>
        <strain evidence="14">Berkeley</strain>
    </source>
</reference>
<reference evidence="11" key="3">
    <citation type="journal article" date="2000" name="Dev. Genes Evol.">
        <title>Restricted expression of a truncated adenylyl cyclase in the cephalic furrow of Drosophila melanogaster.</title>
        <authorList>
            <person name="Cann M.J."/>
            <person name="Levin L.R."/>
        </authorList>
    </citation>
    <scope>FUNCTION</scope>
    <scope>CATALYTIC ACTIVITY</scope>
    <scope>DEVELOPMENTAL STAGE</scope>
    <scope>DOMAIN</scope>
</reference>
<reference evidence="11" key="4">
    <citation type="journal article" date="2008" name="Eur. J. Neurosci.">
        <title>Adenylyl cyclase encoded by AC78C participates in sugar perception in Drosophila melanogaster.</title>
        <authorList>
            <person name="Ueno K."/>
            <person name="Kidokoro Y."/>
        </authorList>
    </citation>
    <scope>FUNCTION</scope>
    <scope>TISSUE SPECIFICITY</scope>
    <scope>DISRUPTION PHENOTYPE</scope>
</reference>
<reference evidence="11" key="5">
    <citation type="journal article" date="2013" name="J. Biol. Rhythms">
        <title>E and M circadian pacemaker neurons use different PDF receptor signalosome components in drosophila.</title>
        <authorList>
            <person name="Duvall L.B."/>
            <person name="Taghert P.H."/>
        </authorList>
    </citation>
    <scope>FUNCTION</scope>
    <scope>DISRUPTION PHENOTYPE</scope>
</reference>